<gene>
    <name evidence="27" type="primary">FECH</name>
</gene>
<dbReference type="EC" id="4.98.1.1" evidence="14 17"/>
<dbReference type="EMBL" id="D00726">
    <property type="protein sequence ID" value="BAA00628.1"/>
    <property type="molecule type" value="mRNA"/>
</dbReference>
<dbReference type="EMBL" id="AJ250235">
    <property type="protein sequence ID" value="CAB65962.1"/>
    <property type="molecule type" value="Genomic_DNA"/>
</dbReference>
<dbReference type="EMBL" id="BT019958">
    <property type="protein sequence ID" value="AAV38761.1"/>
    <property type="molecule type" value="mRNA"/>
</dbReference>
<dbReference type="EMBL" id="AK092416">
    <property type="protein sequence ID" value="BAC03882.1"/>
    <property type="molecule type" value="mRNA"/>
</dbReference>
<dbReference type="EMBL" id="AK292937">
    <property type="protein sequence ID" value="BAF85626.1"/>
    <property type="molecule type" value="mRNA"/>
</dbReference>
<dbReference type="EMBL" id="CH471096">
    <property type="protein sequence ID" value="EAW63046.1"/>
    <property type="molecule type" value="Genomic_DNA"/>
</dbReference>
<dbReference type="EMBL" id="BC039841">
    <property type="protein sequence ID" value="AAH39841.2"/>
    <property type="molecule type" value="mRNA"/>
</dbReference>
<dbReference type="EMBL" id="L36178">
    <property type="protein sequence ID" value="AAA64787.1"/>
    <property type="molecule type" value="Genomic_DNA"/>
</dbReference>
<dbReference type="EMBL" id="AF495859">
    <property type="protein sequence ID" value="AAM18070.1"/>
    <property type="molecule type" value="Genomic_DNA"/>
</dbReference>
<dbReference type="CCDS" id="CCDS11964.1">
    <molecule id="P22830-1"/>
</dbReference>
<dbReference type="CCDS" id="CCDS32836.1">
    <molecule id="P22830-2"/>
</dbReference>
<dbReference type="PIR" id="A36403">
    <property type="entry name" value="A36403"/>
</dbReference>
<dbReference type="RefSeq" id="NP_000131.2">
    <molecule id="P22830-1"/>
    <property type="nucleotide sequence ID" value="NM_000140.5"/>
</dbReference>
<dbReference type="RefSeq" id="NP_001012533.1">
    <molecule id="P22830-2"/>
    <property type="nucleotide sequence ID" value="NM_001012515.4"/>
</dbReference>
<dbReference type="PDB" id="1HRK">
    <property type="method" value="X-ray"/>
    <property type="resolution" value="2.00 A"/>
    <property type="chains" value="A/B=65-423"/>
</dbReference>
<dbReference type="PDB" id="2HRC">
    <property type="method" value="X-ray"/>
    <property type="resolution" value="1.70 A"/>
    <property type="chains" value="A/B=65-423"/>
</dbReference>
<dbReference type="PDB" id="2HRE">
    <property type="method" value="X-ray"/>
    <property type="resolution" value="2.50 A"/>
    <property type="chains" value="A/B/C/D=65-423"/>
</dbReference>
<dbReference type="PDB" id="2PNJ">
    <property type="method" value="X-ray"/>
    <property type="resolution" value="2.35 A"/>
    <property type="chains" value="A/B=65-423"/>
</dbReference>
<dbReference type="PDB" id="2PO5">
    <property type="method" value="X-ray"/>
    <property type="resolution" value="2.20 A"/>
    <property type="chains" value="A/B=65-423"/>
</dbReference>
<dbReference type="PDB" id="2PO7">
    <property type="method" value="X-ray"/>
    <property type="resolution" value="2.20 A"/>
    <property type="chains" value="A/B=65-423"/>
</dbReference>
<dbReference type="PDB" id="2QD1">
    <property type="method" value="X-ray"/>
    <property type="resolution" value="2.20 A"/>
    <property type="chains" value="A/B/C/D=65-423"/>
</dbReference>
<dbReference type="PDB" id="2QD2">
    <property type="method" value="X-ray"/>
    <property type="resolution" value="2.20 A"/>
    <property type="chains" value="A/B=65-423"/>
</dbReference>
<dbReference type="PDB" id="2QD3">
    <property type="method" value="X-ray"/>
    <property type="resolution" value="2.20 A"/>
    <property type="chains" value="A/B=65-423"/>
</dbReference>
<dbReference type="PDB" id="2QD4">
    <property type="method" value="X-ray"/>
    <property type="resolution" value="2.00 A"/>
    <property type="chains" value="A/B=65-423"/>
</dbReference>
<dbReference type="PDB" id="2QD5">
    <property type="method" value="X-ray"/>
    <property type="resolution" value="2.30 A"/>
    <property type="chains" value="A/B=65-423"/>
</dbReference>
<dbReference type="PDB" id="3AQI">
    <property type="method" value="X-ray"/>
    <property type="resolution" value="1.70 A"/>
    <property type="chains" value="A/B=65-423"/>
</dbReference>
<dbReference type="PDB" id="3HCN">
    <property type="method" value="X-ray"/>
    <property type="resolution" value="1.60 A"/>
    <property type="chains" value="A/B=65-423"/>
</dbReference>
<dbReference type="PDB" id="3HCO">
    <property type="method" value="X-ray"/>
    <property type="resolution" value="1.80 A"/>
    <property type="chains" value="A/B=65-423"/>
</dbReference>
<dbReference type="PDB" id="3HCP">
    <property type="method" value="X-ray"/>
    <property type="resolution" value="2.00 A"/>
    <property type="chains" value="A/B=65-423"/>
</dbReference>
<dbReference type="PDB" id="3HCR">
    <property type="method" value="X-ray"/>
    <property type="resolution" value="2.20 A"/>
    <property type="chains" value="A/B=65-423"/>
</dbReference>
<dbReference type="PDB" id="3W1W">
    <property type="method" value="X-ray"/>
    <property type="resolution" value="2.01 A"/>
    <property type="chains" value="A/B=61-423"/>
</dbReference>
<dbReference type="PDB" id="4F4D">
    <property type="method" value="X-ray"/>
    <property type="resolution" value="1.80 A"/>
    <property type="chains" value="A/B=65-423"/>
</dbReference>
<dbReference type="PDB" id="4KLA">
    <property type="method" value="X-ray"/>
    <property type="resolution" value="2.60 A"/>
    <property type="chains" value="A/B=65-423"/>
</dbReference>
<dbReference type="PDB" id="4KLC">
    <property type="method" value="X-ray"/>
    <property type="resolution" value="2.40 A"/>
    <property type="chains" value="A/B=65-423"/>
</dbReference>
<dbReference type="PDB" id="4KLR">
    <property type="method" value="X-ray"/>
    <property type="resolution" value="2.18 A"/>
    <property type="chains" value="A/B=65-423"/>
</dbReference>
<dbReference type="PDB" id="4KMM">
    <property type="method" value="X-ray"/>
    <property type="resolution" value="2.60 A"/>
    <property type="chains" value="A/B=65-423"/>
</dbReference>
<dbReference type="PDB" id="4MK4">
    <property type="method" value="X-ray"/>
    <property type="resolution" value="2.50 A"/>
    <property type="chains" value="A/B=65-423"/>
</dbReference>
<dbReference type="PDB" id="7CT7">
    <property type="method" value="X-ray"/>
    <property type="resolution" value="2.00 A"/>
    <property type="chains" value="A/B=61-423"/>
</dbReference>
<dbReference type="PDB" id="7CTC">
    <property type="method" value="X-ray"/>
    <property type="resolution" value="2.00 A"/>
    <property type="chains" value="A/D=1-423"/>
</dbReference>
<dbReference type="PDBsum" id="1HRK"/>
<dbReference type="PDBsum" id="2HRC"/>
<dbReference type="PDBsum" id="2HRE"/>
<dbReference type="PDBsum" id="2PNJ"/>
<dbReference type="PDBsum" id="2PO5"/>
<dbReference type="PDBsum" id="2PO7"/>
<dbReference type="PDBsum" id="2QD1"/>
<dbReference type="PDBsum" id="2QD2"/>
<dbReference type="PDBsum" id="2QD3"/>
<dbReference type="PDBsum" id="2QD4"/>
<dbReference type="PDBsum" id="2QD5"/>
<dbReference type="PDBsum" id="3AQI"/>
<dbReference type="PDBsum" id="3HCN"/>
<dbReference type="PDBsum" id="3HCO"/>
<dbReference type="PDBsum" id="3HCP"/>
<dbReference type="PDBsum" id="3HCR"/>
<dbReference type="PDBsum" id="3W1W"/>
<dbReference type="PDBsum" id="4F4D"/>
<dbReference type="PDBsum" id="4KLA"/>
<dbReference type="PDBsum" id="4KLC"/>
<dbReference type="PDBsum" id="4KLR"/>
<dbReference type="PDBsum" id="4KMM"/>
<dbReference type="PDBsum" id="4MK4"/>
<dbReference type="PDBsum" id="7CT7"/>
<dbReference type="PDBsum" id="7CTC"/>
<dbReference type="SMR" id="P22830"/>
<dbReference type="BioGRID" id="108526">
    <property type="interactions" value="177"/>
</dbReference>
<dbReference type="ComplexPortal" id="CPX-8302">
    <property type="entry name" value="ABCB10-ABCB7-FECH ABC transporter"/>
</dbReference>
<dbReference type="DIP" id="DIP-39632N"/>
<dbReference type="FunCoup" id="P22830">
    <property type="interactions" value="1765"/>
</dbReference>
<dbReference type="IntAct" id="P22830">
    <property type="interactions" value="98"/>
</dbReference>
<dbReference type="MINT" id="P22830"/>
<dbReference type="STRING" id="9606.ENSP00000498358"/>
<dbReference type="BindingDB" id="P22830"/>
<dbReference type="ChEMBL" id="CHEMBL3879831"/>
<dbReference type="DrugBank" id="DB02659">
    <property type="generic name" value="Cholic Acid"/>
</dbReference>
<dbReference type="DrugBank" id="DB00992">
    <property type="generic name" value="Methyl aminolevulinate"/>
</dbReference>
<dbReference type="DrugBank" id="DB01911">
    <property type="generic name" value="N-Methylmesoporphyrin"/>
</dbReference>
<dbReference type="DrugCentral" id="P22830"/>
<dbReference type="GlyGen" id="P22830">
    <property type="glycosylation" value="1 site, 1 O-linked glycan (1 site)"/>
</dbReference>
<dbReference type="iPTMnet" id="P22830"/>
<dbReference type="PhosphoSitePlus" id="P22830"/>
<dbReference type="SwissPalm" id="P22830"/>
<dbReference type="BioMuta" id="FECH"/>
<dbReference type="DMDM" id="85701348"/>
<dbReference type="jPOST" id="P22830"/>
<dbReference type="MassIVE" id="P22830"/>
<dbReference type="PaxDb" id="9606-ENSP00000372326"/>
<dbReference type="PeptideAtlas" id="P22830"/>
<dbReference type="ProteomicsDB" id="54041">
    <molecule id="P22830-1"/>
</dbReference>
<dbReference type="ProteomicsDB" id="54042">
    <molecule id="P22830-2"/>
</dbReference>
<dbReference type="Pumba" id="P22830"/>
<dbReference type="Antibodypedia" id="9673">
    <property type="antibodies" value="200 antibodies from 30 providers"/>
</dbReference>
<dbReference type="DNASU" id="2235"/>
<dbReference type="Ensembl" id="ENST00000262093.11">
    <molecule id="P22830-1"/>
    <property type="protein sequence ID" value="ENSP00000262093.6"/>
    <property type="gene ID" value="ENSG00000066926.13"/>
</dbReference>
<dbReference type="Ensembl" id="ENST00000652755.1">
    <molecule id="P22830-2"/>
    <property type="protein sequence ID" value="ENSP00000498358.1"/>
    <property type="gene ID" value="ENSG00000066926.13"/>
</dbReference>
<dbReference type="GeneID" id="2235"/>
<dbReference type="KEGG" id="hsa:2235"/>
<dbReference type="MANE-Select" id="ENST00000262093.11">
    <property type="protein sequence ID" value="ENSP00000262093.6"/>
    <property type="RefSeq nucleotide sequence ID" value="NM_000140.5"/>
    <property type="RefSeq protein sequence ID" value="NP_000131.2"/>
</dbReference>
<dbReference type="UCSC" id="uc002lgp.5">
    <molecule id="P22830-1"/>
    <property type="organism name" value="human"/>
</dbReference>
<dbReference type="AGR" id="HGNC:3647"/>
<dbReference type="CTD" id="2235"/>
<dbReference type="DisGeNET" id="2235"/>
<dbReference type="GeneCards" id="FECH"/>
<dbReference type="GeneReviews" id="FECH"/>
<dbReference type="HGNC" id="HGNC:3647">
    <property type="gene designation" value="FECH"/>
</dbReference>
<dbReference type="HPA" id="ENSG00000066926">
    <property type="expression patterns" value="Low tissue specificity"/>
</dbReference>
<dbReference type="MalaCards" id="FECH"/>
<dbReference type="MIM" id="177000">
    <property type="type" value="phenotype"/>
</dbReference>
<dbReference type="MIM" id="612386">
    <property type="type" value="gene"/>
</dbReference>
<dbReference type="neXtProt" id="NX_P22830"/>
<dbReference type="OpenTargets" id="ENSG00000066926"/>
<dbReference type="Orphanet" id="79278">
    <property type="disease" value="Autosomal erythropoietic protoporphyria"/>
</dbReference>
<dbReference type="PharmGKB" id="PA28087"/>
<dbReference type="VEuPathDB" id="HostDB:ENSG00000066926"/>
<dbReference type="eggNOG" id="KOG1321">
    <property type="taxonomic scope" value="Eukaryota"/>
</dbReference>
<dbReference type="GeneTree" id="ENSGT00390000016258"/>
<dbReference type="InParanoid" id="P22830"/>
<dbReference type="OMA" id="DPYHCEC"/>
<dbReference type="OrthoDB" id="1323at2759"/>
<dbReference type="PAN-GO" id="P22830">
    <property type="GO annotations" value="3 GO annotations based on evolutionary models"/>
</dbReference>
<dbReference type="PhylomeDB" id="P22830"/>
<dbReference type="TreeFam" id="TF300859"/>
<dbReference type="BioCyc" id="MetaCyc:HS00891-MONOMER"/>
<dbReference type="BRENDA" id="4.99.1.1">
    <property type="organism ID" value="2681"/>
</dbReference>
<dbReference type="PathwayCommons" id="P22830"/>
<dbReference type="Reactome" id="R-HSA-189451">
    <property type="pathway name" value="Heme biosynthesis"/>
</dbReference>
<dbReference type="Reactome" id="R-HSA-9837999">
    <property type="pathway name" value="Mitochondrial protein degradation"/>
</dbReference>
<dbReference type="SABIO-RK" id="P22830"/>
<dbReference type="SignaLink" id="P22830"/>
<dbReference type="UniPathway" id="UPA00252">
    <property type="reaction ID" value="UER00325"/>
</dbReference>
<dbReference type="BioGRID-ORCS" id="2235">
    <property type="hits" value="278 hits in 1171 CRISPR screens"/>
</dbReference>
<dbReference type="ChiTaRS" id="FECH">
    <property type="organism name" value="human"/>
</dbReference>
<dbReference type="EvolutionaryTrace" id="P22830"/>
<dbReference type="GeneWiki" id="Ferrochelatase"/>
<dbReference type="GenomeRNAi" id="2235"/>
<dbReference type="Pharos" id="P22830">
    <property type="development level" value="Tchem"/>
</dbReference>
<dbReference type="PRO" id="PR:P22830"/>
<dbReference type="Proteomes" id="UP000005640">
    <property type="component" value="Chromosome 18"/>
</dbReference>
<dbReference type="RNAct" id="P22830">
    <property type="molecule type" value="protein"/>
</dbReference>
<dbReference type="Bgee" id="ENSG00000066926">
    <property type="expression patterns" value="Expressed in trabecular bone tissue and 185 other cell types or tissues"/>
</dbReference>
<dbReference type="ExpressionAtlas" id="P22830">
    <property type="expression patterns" value="baseline and differential"/>
</dbReference>
<dbReference type="GO" id="GO:0005743">
    <property type="term" value="C:mitochondrial inner membrane"/>
    <property type="evidence" value="ECO:0000250"/>
    <property type="project" value="UniProtKB"/>
</dbReference>
<dbReference type="GO" id="GO:0005759">
    <property type="term" value="C:mitochondrial matrix"/>
    <property type="evidence" value="ECO:0007669"/>
    <property type="project" value="Ensembl"/>
</dbReference>
<dbReference type="GO" id="GO:0005739">
    <property type="term" value="C:mitochondrion"/>
    <property type="evidence" value="ECO:0006056"/>
    <property type="project" value="FlyBase"/>
</dbReference>
<dbReference type="GO" id="GO:0051537">
    <property type="term" value="F:2 iron, 2 sulfur cluster binding"/>
    <property type="evidence" value="ECO:0007669"/>
    <property type="project" value="UniProtKB-KW"/>
</dbReference>
<dbReference type="GO" id="GO:0004325">
    <property type="term" value="F:ferrochelatase activity"/>
    <property type="evidence" value="ECO:0000314"/>
    <property type="project" value="UniProtKB"/>
</dbReference>
<dbReference type="GO" id="GO:0008198">
    <property type="term" value="F:ferrous iron binding"/>
    <property type="evidence" value="ECO:0000304"/>
    <property type="project" value="ProtInc"/>
</dbReference>
<dbReference type="GO" id="GO:0020037">
    <property type="term" value="F:heme binding"/>
    <property type="evidence" value="ECO:0007669"/>
    <property type="project" value="Ensembl"/>
</dbReference>
<dbReference type="GO" id="GO:0042802">
    <property type="term" value="F:identical protein binding"/>
    <property type="evidence" value="ECO:0000353"/>
    <property type="project" value="IntAct"/>
</dbReference>
<dbReference type="GO" id="GO:0030350">
    <property type="term" value="F:iron-responsive element binding"/>
    <property type="evidence" value="ECO:0007669"/>
    <property type="project" value="Ensembl"/>
</dbReference>
<dbReference type="GO" id="GO:0042803">
    <property type="term" value="F:protein homodimerization activity"/>
    <property type="evidence" value="ECO:0000314"/>
    <property type="project" value="UniProtKB"/>
</dbReference>
<dbReference type="GO" id="GO:0071549">
    <property type="term" value="P:cellular response to dexamethasone stimulus"/>
    <property type="evidence" value="ECO:0007669"/>
    <property type="project" value="Ensembl"/>
</dbReference>
<dbReference type="GO" id="GO:0008203">
    <property type="term" value="P:cholesterol metabolic process"/>
    <property type="evidence" value="ECO:0007669"/>
    <property type="project" value="Ensembl"/>
</dbReference>
<dbReference type="GO" id="GO:0009589">
    <property type="term" value="P:detection of UV"/>
    <property type="evidence" value="ECO:0007669"/>
    <property type="project" value="Ensembl"/>
</dbReference>
<dbReference type="GO" id="GO:0030218">
    <property type="term" value="P:erythrocyte differentiation"/>
    <property type="evidence" value="ECO:0007669"/>
    <property type="project" value="Ensembl"/>
</dbReference>
<dbReference type="GO" id="GO:0006091">
    <property type="term" value="P:generation of precursor metabolites and energy"/>
    <property type="evidence" value="ECO:0000304"/>
    <property type="project" value="ProtInc"/>
</dbReference>
<dbReference type="GO" id="GO:0006784">
    <property type="term" value="P:heme A biosynthetic process"/>
    <property type="evidence" value="ECO:0007669"/>
    <property type="project" value="Ensembl"/>
</dbReference>
<dbReference type="GO" id="GO:0006785">
    <property type="term" value="P:heme B biosynthetic process"/>
    <property type="evidence" value="ECO:0000314"/>
    <property type="project" value="UniProt"/>
</dbReference>
<dbReference type="GO" id="GO:0006783">
    <property type="term" value="P:heme biosynthetic process"/>
    <property type="evidence" value="ECO:0000314"/>
    <property type="project" value="UniProtKB"/>
</dbReference>
<dbReference type="GO" id="GO:0048034">
    <property type="term" value="P:heme O biosynthetic process"/>
    <property type="evidence" value="ECO:0007669"/>
    <property type="project" value="Ensembl"/>
</dbReference>
<dbReference type="GO" id="GO:0060586">
    <property type="term" value="P:multicellular organismal-level iron ion homeostasis"/>
    <property type="evidence" value="ECO:0007669"/>
    <property type="project" value="Ensembl"/>
</dbReference>
<dbReference type="GO" id="GO:0046501">
    <property type="term" value="P:protoporphyrinogen IX metabolic process"/>
    <property type="evidence" value="ECO:0000314"/>
    <property type="project" value="BHF-UCL"/>
</dbReference>
<dbReference type="GO" id="GO:0046984">
    <property type="term" value="P:regulation of hemoglobin biosynthetic process"/>
    <property type="evidence" value="ECO:0007669"/>
    <property type="project" value="Ensembl"/>
</dbReference>
<dbReference type="GO" id="GO:0046685">
    <property type="term" value="P:response to arsenic-containing substance"/>
    <property type="evidence" value="ECO:0007669"/>
    <property type="project" value="Ensembl"/>
</dbReference>
<dbReference type="GO" id="GO:0045471">
    <property type="term" value="P:response to ethanol"/>
    <property type="evidence" value="ECO:0007669"/>
    <property type="project" value="Ensembl"/>
</dbReference>
<dbReference type="GO" id="GO:0017085">
    <property type="term" value="P:response to insecticide"/>
    <property type="evidence" value="ECO:0007669"/>
    <property type="project" value="Ensembl"/>
</dbReference>
<dbReference type="GO" id="GO:0010288">
    <property type="term" value="P:response to lead ion"/>
    <property type="evidence" value="ECO:0007669"/>
    <property type="project" value="Ensembl"/>
</dbReference>
<dbReference type="GO" id="GO:0009416">
    <property type="term" value="P:response to light stimulus"/>
    <property type="evidence" value="ECO:0000304"/>
    <property type="project" value="ProtInc"/>
</dbReference>
<dbReference type="GO" id="GO:0051597">
    <property type="term" value="P:response to methylmercury"/>
    <property type="evidence" value="ECO:0007669"/>
    <property type="project" value="Ensembl"/>
</dbReference>
<dbReference type="GO" id="GO:0070541">
    <property type="term" value="P:response to platinum ion"/>
    <property type="evidence" value="ECO:0007669"/>
    <property type="project" value="Ensembl"/>
</dbReference>
<dbReference type="GO" id="GO:0009410">
    <property type="term" value="P:response to xenobiotic stimulus"/>
    <property type="evidence" value="ECO:0007669"/>
    <property type="project" value="Ensembl"/>
</dbReference>
<dbReference type="GO" id="GO:0034379">
    <property type="term" value="P:very-low-density lipoprotein particle assembly"/>
    <property type="evidence" value="ECO:0007669"/>
    <property type="project" value="Ensembl"/>
</dbReference>
<dbReference type="CDD" id="cd00419">
    <property type="entry name" value="Ferrochelatase_C"/>
    <property type="match status" value="1"/>
</dbReference>
<dbReference type="CDD" id="cd03411">
    <property type="entry name" value="Ferrochelatase_N"/>
    <property type="match status" value="1"/>
</dbReference>
<dbReference type="FunFam" id="3.40.50.1400:FF:000003">
    <property type="entry name" value="Ferrochelatase"/>
    <property type="match status" value="1"/>
</dbReference>
<dbReference type="Gene3D" id="3.40.50.1400">
    <property type="match status" value="2"/>
</dbReference>
<dbReference type="HAMAP" id="MF_00323">
    <property type="entry name" value="Ferrochelatase"/>
    <property type="match status" value="1"/>
</dbReference>
<dbReference type="InterPro" id="IPR001015">
    <property type="entry name" value="Ferrochelatase"/>
</dbReference>
<dbReference type="InterPro" id="IPR019772">
    <property type="entry name" value="Ferrochelatase_AS"/>
</dbReference>
<dbReference type="InterPro" id="IPR033644">
    <property type="entry name" value="Ferrochelatase_C"/>
</dbReference>
<dbReference type="InterPro" id="IPR033659">
    <property type="entry name" value="Ferrochelatase_N"/>
</dbReference>
<dbReference type="NCBIfam" id="TIGR00109">
    <property type="entry name" value="hemH"/>
    <property type="match status" value="1"/>
</dbReference>
<dbReference type="PANTHER" id="PTHR11108">
    <property type="entry name" value="FERROCHELATASE"/>
    <property type="match status" value="1"/>
</dbReference>
<dbReference type="PANTHER" id="PTHR11108:SF1">
    <property type="entry name" value="FERROCHELATASE, MITOCHONDRIAL"/>
    <property type="match status" value="1"/>
</dbReference>
<dbReference type="Pfam" id="PF00762">
    <property type="entry name" value="Ferrochelatase"/>
    <property type="match status" value="1"/>
</dbReference>
<dbReference type="SUPFAM" id="SSF53800">
    <property type="entry name" value="Chelatase"/>
    <property type="match status" value="1"/>
</dbReference>
<dbReference type="PROSITE" id="PS00534">
    <property type="entry name" value="FERROCHELATASE"/>
    <property type="match status" value="1"/>
</dbReference>
<sequence length="423" mass="47862">MRSLGANMAAALRAAGVLLRDPLASSSWRVCQPWRWKSGAAAAAVTTETAQHAQGAKPQVQPQKRKPKTGILMLNMGGPETLGDVHDFLLRLFLDRDLMTLPIQNKLAPFIAKRRTPKIQEQYRRIGGGSPIKIWTSKQGEGMVKLLDELSPNTAPHKYYIGFRYVHPLTEEAIEEMERDGLERAIAFTQYPQYSCSTTGSSLNAIYRYYNQVGRKPTMKWSTIDRWPTHHLLIQCFADHILKELDHFPLEKRSEVVILFSAHSLPMSVVNRGDPYPQEVSATVQKVMERLEYCNPYRLVWQSKVGPMPWLGPQTDESIKGLCERGRKNILLVPIAFTSDHIETLYELDIEYSQVLAKECGVENIRRAESLNGNPLFSKALADLVHSHIQSNELCSKQLTLSCPLCVNPVCRETKSFFTSQQL</sequence>
<keyword id="KW-0001">2Fe-2S</keyword>
<keyword id="KW-0002">3D-structure</keyword>
<keyword id="KW-0007">Acetylation</keyword>
<keyword id="KW-0025">Alternative splicing</keyword>
<keyword id="KW-0225">Disease variant</keyword>
<keyword id="KW-0350">Heme biosynthesis</keyword>
<keyword id="KW-0408">Iron</keyword>
<keyword id="KW-0411">Iron-sulfur</keyword>
<keyword id="KW-0456">Lyase</keyword>
<keyword id="KW-0472">Membrane</keyword>
<keyword id="KW-0479">Metal-binding</keyword>
<keyword id="KW-0496">Mitochondrion</keyword>
<keyword id="KW-0999">Mitochondrion inner membrane</keyword>
<keyword id="KW-0627">Porphyrin biosynthesis</keyword>
<keyword id="KW-1267">Proteomics identification</keyword>
<keyword id="KW-1185">Reference proteome</keyword>
<keyword id="KW-0809">Transit peptide</keyword>
<accession>P22830</accession>
<accession>A8KA72</accession>
<accession>Q8IXN1</accession>
<accession>Q8NAN0</accession>
<feature type="transit peptide" description="Mitochondrion" evidence="2">
    <location>
        <begin position="1"/>
        <end position="54"/>
    </location>
</feature>
<feature type="chain" id="PRO_0000008873" description="Ferrochelatase, mitochondrial">
    <location>
        <begin position="55"/>
        <end position="423"/>
    </location>
</feature>
<feature type="active site" evidence="4">
    <location>
        <position position="230"/>
    </location>
</feature>
<feature type="active site" evidence="4">
    <location>
        <position position="383"/>
    </location>
</feature>
<feature type="binding site" evidence="11 30">
    <location>
        <position position="115"/>
    </location>
    <ligand>
        <name>protoporphyrin IX</name>
        <dbReference type="ChEBI" id="CHEBI:57306"/>
    </ligand>
</feature>
<feature type="binding site" evidence="11 30">
    <location>
        <position position="123"/>
    </location>
    <ligand>
        <name>protoporphyrin IX</name>
        <dbReference type="ChEBI" id="CHEBI:57306"/>
    </ligand>
</feature>
<feature type="binding site" evidence="11 30">
    <location>
        <position position="130"/>
    </location>
    <ligand>
        <name>protoporphyrin IX</name>
        <dbReference type="ChEBI" id="CHEBI:57306"/>
    </ligand>
</feature>
<feature type="binding site" evidence="4 11 28 29">
    <location>
        <position position="196"/>
    </location>
    <ligand>
        <name>[2Fe-2S] cluster</name>
        <dbReference type="ChEBI" id="CHEBI:190135"/>
    </ligand>
</feature>
<feature type="binding site" evidence="4 28">
    <location>
        <position position="403"/>
    </location>
    <ligand>
        <name>[2Fe-2S] cluster</name>
        <dbReference type="ChEBI" id="CHEBI:190135"/>
    </ligand>
</feature>
<feature type="binding site" evidence="4 28">
    <location>
        <position position="406"/>
    </location>
    <ligand>
        <name>[2Fe-2S] cluster</name>
        <dbReference type="ChEBI" id="CHEBI:190135"/>
    </ligand>
</feature>
<feature type="binding site" evidence="4 28">
    <location>
        <position position="411"/>
    </location>
    <ligand>
        <name>[2Fe-2S] cluster</name>
        <dbReference type="ChEBI" id="CHEBI:190135"/>
    </ligand>
</feature>
<feature type="modified residue" description="N6-acetyllysine" evidence="1">
    <location>
        <position position="57"/>
    </location>
</feature>
<feature type="modified residue" description="N6-succinyllysine" evidence="1">
    <location>
        <position position="138"/>
    </location>
</feature>
<feature type="modified residue" description="N6-acetyllysine; alternate" evidence="1">
    <location>
        <position position="415"/>
    </location>
</feature>
<feature type="modified residue" description="N6-succinyllysine; alternate" evidence="1">
    <location>
        <position position="415"/>
    </location>
</feature>
<feature type="splice variant" id="VSP_041208" description="In isoform 2." evidence="23">
    <original>K</original>
    <variation>KRYESNI</variation>
    <location>
        <position position="64"/>
    </location>
</feature>
<feature type="sequence variant" id="VAR_002383" description="In EPP1; dbSNP:rs3848519." evidence="12">
    <original>G</original>
    <variation>C</variation>
    <location>
        <position position="55"/>
    </location>
</feature>
<feature type="sequence variant" id="VAR_030553" description="In EPP1; dbSNP:rs150830931." evidence="6">
    <original>P</original>
    <variation>R</variation>
    <location>
        <position position="62"/>
    </location>
</feature>
<feature type="sequence variant" id="VAR_030554" description="In EPP1; enzyme totally inactive." evidence="20">
    <original>I</original>
    <variation>K</variation>
    <location>
        <position position="71"/>
    </location>
</feature>
<feature type="sequence variant" id="VAR_012028" description="In dbSNP:rs1041951." evidence="13 22">
    <original>R</original>
    <variation>Q</variation>
    <location>
        <position position="96"/>
    </location>
</feature>
<feature type="sequence variant" id="VAR_030555" description="In EPP1; enzyme retains 18% of activity; dbSNP:rs1356965294." evidence="9">
    <original>Q</original>
    <variation>L</variation>
    <location>
        <position position="139"/>
    </location>
</feature>
<feature type="sequence variant" id="VAR_030556" description="In EPP1; enzyme totally inactive." evidence="20">
    <original>S</original>
    <variation>P</variation>
    <location>
        <position position="151"/>
    </location>
</feature>
<feature type="sequence variant" id="VAR_030557" description="In EPP1; dbSNP:rs1160565035." evidence="7">
    <original>E</original>
    <variation>K</variation>
    <location>
        <position position="178"/>
    </location>
</feature>
<feature type="sequence variant" id="VAR_030558" description="In EPP1; enzyme totally inactive." evidence="5">
    <original>L</original>
    <variation>R</variation>
    <location>
        <position position="182"/>
    </location>
</feature>
<feature type="sequence variant" id="VAR_002384" description="In EPP1; dbSNP:rs1598996367." evidence="18">
    <original>I</original>
    <variation>T</variation>
    <location>
        <position position="186"/>
    </location>
</feature>
<feature type="sequence variant" id="VAR_030559" description="In EPP1; enzyme retains 72% of activity; dbSNP:rs1055019947." evidence="20">
    <original>Y</original>
    <variation>H</variation>
    <location>
        <position position="191"/>
    </location>
</feature>
<feature type="sequence variant" id="VAR_030560" description="In EPP1; enzyme totally inactive." evidence="20">
    <original>P</original>
    <variation>T</variation>
    <location>
        <position position="192"/>
    </location>
</feature>
<feature type="sequence variant" id="VAR_030561" description="In EPP1; enzyme retains 12% of activity; dbSNP:rs761962617." evidence="9">
    <original>C</original>
    <variation>Y</variation>
    <location>
        <position position="236"/>
    </location>
</feature>
<feature type="sequence variant" id="VAR_030562" description="In EPP1; enzyme retains 52% of activity." evidence="9">
    <original>F</original>
    <variation>L</variation>
    <location>
        <position position="260"/>
    </location>
</feature>
<feature type="sequence variant" id="VAR_054629" description="In EPP1." evidence="10">
    <original>S</original>
    <variation>L</variation>
    <location>
        <position position="264"/>
    </location>
</feature>
<feature type="sequence variant" id="VAR_002385" description="In EPP1; unchanged activity; but increased thermolability; dbSNP:rs118204037." evidence="12">
    <original>M</original>
    <variation>I</variation>
    <location>
        <position position="267"/>
    </location>
</feature>
<feature type="sequence variant" id="VAR_030563" description="In EPP1; enzyme almost inactive." evidence="20">
    <original>T</original>
    <variation>I</variation>
    <location>
        <position position="283"/>
    </location>
</feature>
<feature type="sequence variant" id="VAR_030564" description="In EPP1; enzyme totally inactive." evidence="20">
    <original>M</original>
    <variation>K</variation>
    <location>
        <position position="288"/>
    </location>
</feature>
<feature type="sequence variant" id="VAR_030565" description="In EPP1; enzyme retains 19% of activity; dbSNP:rs150146721." evidence="7 20">
    <original>P</original>
    <variation>L</variation>
    <location>
        <position position="334"/>
    </location>
</feature>
<feature type="sequence variant" id="VAR_030566" description="In EPP1; dbSNP:rs118204040." evidence="16">
    <original>V</original>
    <variation>G</variation>
    <location>
        <position position="362"/>
    </location>
</feature>
<feature type="sequence variant" id="VAR_030567" description="In EPP1; enzyme retains 37% of activity." evidence="9">
    <original>K</original>
    <variation>N</variation>
    <location>
        <position position="379"/>
    </location>
</feature>
<feature type="sequence variant" id="VAR_002386" description="In EPP1; loss of activity." evidence="21">
    <original>H</original>
    <variation>P</variation>
    <location>
        <position position="386"/>
    </location>
</feature>
<feature type="sequence variant" id="VAR_030568" description="In EPP1; enzyme almost inactive." evidence="3">
    <original>C</original>
    <variation>S</variation>
    <location>
        <position position="406"/>
    </location>
</feature>
<feature type="sequence variant" id="VAR_030569" description="In EPP1; enzyme almost inactive; dbSNP:rs1324421474." evidence="3">
    <original>C</original>
    <variation>Y</variation>
    <location>
        <position position="406"/>
    </location>
</feature>
<feature type="sequence variant" id="VAR_030570" description="In EPP1; no detectable enzymatic activity." evidence="3">
    <original>NPVC</original>
    <variation>KSVG</variation>
    <location>
        <begin position="408"/>
        <end position="411"/>
    </location>
</feature>
<feature type="sequence variant" id="VAR_002387" description="In EPP1; reduced activity; dbSNP:rs118204039." evidence="8">
    <original>F</original>
    <variation>S</variation>
    <location>
        <position position="417"/>
    </location>
</feature>
<feature type="sequence variant" id="VAR_030571" description="In EPP1; enzyme totally inactive." evidence="20">
    <location>
        <position position="417"/>
    </location>
</feature>
<feature type="mutagenesis site" description="Increases activity inhibition upon interaction with PGRMC1." evidence="14">
    <original>F</original>
    <variation>A</variation>
    <location>
        <position position="110"/>
    </location>
</feature>
<feature type="mutagenesis site" description="Loss of activity." evidence="17">
    <original>C</original>
    <variation>S</variation>
    <location>
        <position position="196"/>
    </location>
</feature>
<feature type="mutagenesis site" description="No loss of activity." evidence="17">
    <original>C</original>
    <variation>S</variation>
    <location>
        <position position="360"/>
    </location>
</feature>
<feature type="mutagenesis site" description="No loss of activity." evidence="17">
    <original>C</original>
    <variation>S</variation>
    <location>
        <position position="395"/>
    </location>
</feature>
<feature type="mutagenesis site" description="Loss of activity." evidence="17">
    <original>C</original>
    <variation>D</variation>
    <variation>H</variation>
    <location>
        <position position="403"/>
    </location>
</feature>
<feature type="mutagenesis site" description="Loss of activity." evidence="17">
    <original>C</original>
    <variation>D</variation>
    <variation>H</variation>
    <variation>S</variation>
    <location>
        <position position="406"/>
    </location>
</feature>
<feature type="mutagenesis site" description="Loss of activity." evidence="17">
    <original>C</original>
    <variation>H</variation>
    <variation>S</variation>
    <location>
        <position position="411"/>
    </location>
</feature>
<feature type="mutagenesis site" description="Decreased activity." evidence="17">
    <original>F</original>
    <variation>L</variation>
    <location>
        <position position="417"/>
    </location>
</feature>
<feature type="mutagenesis site" description="Greatly reduced activity." evidence="17">
    <original>F</original>
    <variation>Y</variation>
    <variation>W</variation>
    <location>
        <position position="417"/>
    </location>
</feature>
<feature type="sequence conflict" description="In Ref. 4; BAC03882." evidence="26" ref="4">
    <original>P</original>
    <variation>S</variation>
    <location>
        <position position="228"/>
    </location>
</feature>
<feature type="strand" evidence="32">
    <location>
        <begin position="69"/>
        <end position="75"/>
    </location>
</feature>
<feature type="helix" evidence="32">
    <location>
        <begin position="82"/>
        <end position="84"/>
    </location>
</feature>
<feature type="helix" evidence="32">
    <location>
        <begin position="85"/>
        <end position="93"/>
    </location>
</feature>
<feature type="turn" evidence="32">
    <location>
        <begin position="96"/>
        <end position="98"/>
    </location>
</feature>
<feature type="helix" evidence="32">
    <location>
        <begin position="104"/>
        <end position="125"/>
    </location>
</feature>
<feature type="helix" evidence="32">
    <location>
        <begin position="132"/>
        <end position="150"/>
    </location>
</feature>
<feature type="helix" evidence="32">
    <location>
        <begin position="152"/>
        <end position="154"/>
    </location>
</feature>
<feature type="strand" evidence="32">
    <location>
        <begin position="156"/>
        <end position="169"/>
    </location>
</feature>
<feature type="helix" evidence="32">
    <location>
        <begin position="170"/>
        <end position="179"/>
    </location>
</feature>
<feature type="strand" evidence="32">
    <location>
        <begin position="183"/>
        <end position="190"/>
    </location>
</feature>
<feature type="turn" evidence="32">
    <location>
        <begin position="196"/>
        <end position="198"/>
    </location>
</feature>
<feature type="helix" evidence="32">
    <location>
        <begin position="199"/>
        <end position="212"/>
    </location>
</feature>
<feature type="strand" evidence="32">
    <location>
        <begin position="218"/>
        <end position="224"/>
    </location>
</feature>
<feature type="helix" evidence="32">
    <location>
        <begin position="231"/>
        <end position="245"/>
    </location>
</feature>
<feature type="turn" evidence="32">
    <location>
        <begin position="250"/>
        <end position="252"/>
    </location>
</feature>
<feature type="helix" evidence="32">
    <location>
        <begin position="253"/>
        <end position="255"/>
    </location>
</feature>
<feature type="strand" evidence="32">
    <location>
        <begin position="257"/>
        <end position="263"/>
    </location>
</feature>
<feature type="helix" evidence="32">
    <location>
        <begin position="267"/>
        <end position="270"/>
    </location>
</feature>
<feature type="turn" evidence="32">
    <location>
        <begin position="271"/>
        <end position="273"/>
    </location>
</feature>
<feature type="helix" evidence="32">
    <location>
        <begin position="276"/>
        <end position="290"/>
    </location>
</feature>
<feature type="turn" evidence="32">
    <location>
        <begin position="291"/>
        <end position="293"/>
    </location>
</feature>
<feature type="strand" evidence="32">
    <location>
        <begin position="297"/>
        <end position="302"/>
    </location>
</feature>
<feature type="strand" evidence="31">
    <location>
        <begin position="306"/>
        <end position="308"/>
    </location>
</feature>
<feature type="strand" evidence="32">
    <location>
        <begin position="310"/>
        <end position="314"/>
    </location>
</feature>
<feature type="helix" evidence="32">
    <location>
        <begin position="315"/>
        <end position="324"/>
    </location>
</feature>
<feature type="strand" evidence="32">
    <location>
        <begin position="329"/>
        <end position="333"/>
    </location>
</feature>
<feature type="helix" evidence="32">
    <location>
        <begin position="345"/>
        <end position="348"/>
    </location>
</feature>
<feature type="helix" evidence="32">
    <location>
        <begin position="350"/>
        <end position="359"/>
    </location>
</feature>
<feature type="strand" evidence="32">
    <location>
        <begin position="364"/>
        <end position="367"/>
    </location>
</feature>
<feature type="strand" evidence="33">
    <location>
        <begin position="371"/>
        <end position="373"/>
    </location>
</feature>
<feature type="helix" evidence="32">
    <location>
        <begin position="375"/>
        <end position="391"/>
    </location>
</feature>
<feature type="helix" evidence="32">
    <location>
        <begin position="397"/>
        <end position="400"/>
    </location>
</feature>
<feature type="helix" evidence="32">
    <location>
        <begin position="410"/>
        <end position="419"/>
    </location>
</feature>
<name>HEMH_HUMAN</name>
<proteinExistence type="evidence at protein level"/>
<reference key="1">
    <citation type="journal article" date="1990" name="Biochem. Biophys. Res. Commun.">
        <title>Molecular cloning and sequence analysis of cDNA encoding human ferrochelatase.</title>
        <authorList>
            <person name="Nakahashi Y."/>
            <person name="Taketani S."/>
            <person name="Okuda M."/>
            <person name="Inoue K."/>
            <person name="Tokunaga R."/>
        </authorList>
    </citation>
    <scope>NUCLEOTIDE SEQUENCE [MRNA] (ISOFORM 1)</scope>
    <scope>VARIANT GLN-96</scope>
</reference>
<reference key="2">
    <citation type="submission" date="1999-10" db="EMBL/GenBank/DDBJ databases">
        <title>Ferrochelatase: complete human gene sequence, amplifiable polymorphisms and molecular study of 12 families with erythropoietic protoporphyria.</title>
        <authorList>
            <person name="Gouya L.M."/>
            <person name="Martin C."/>
            <person name="Deybach J.-C."/>
            <person name="Puy H.V."/>
        </authorList>
    </citation>
    <scope>NUCLEOTIDE SEQUENCE [GENOMIC DNA]</scope>
    <scope>VARIANT GLN-96</scope>
</reference>
<reference key="3">
    <citation type="submission" date="2004-10" db="EMBL/GenBank/DDBJ databases">
        <title>Cloning of human full-length CDSs in BD Creator(TM) system donor vector.</title>
        <authorList>
            <person name="Kalnine N."/>
            <person name="Chen X."/>
            <person name="Rolfs A."/>
            <person name="Halleck A."/>
            <person name="Hines L."/>
            <person name="Eisenstein S."/>
            <person name="Koundinya M."/>
            <person name="Raphael J."/>
            <person name="Moreira D."/>
            <person name="Kelley T."/>
            <person name="LaBaer J."/>
            <person name="Lin Y."/>
            <person name="Phelan M."/>
            <person name="Farmer A."/>
        </authorList>
    </citation>
    <scope>NUCLEOTIDE SEQUENCE [LARGE SCALE MRNA] (ISOFORM 1)</scope>
</reference>
<reference key="4">
    <citation type="journal article" date="2004" name="Nat. Genet.">
        <title>Complete sequencing and characterization of 21,243 full-length human cDNAs.</title>
        <authorList>
            <person name="Ota T."/>
            <person name="Suzuki Y."/>
            <person name="Nishikawa T."/>
            <person name="Otsuki T."/>
            <person name="Sugiyama T."/>
            <person name="Irie R."/>
            <person name="Wakamatsu A."/>
            <person name="Hayashi K."/>
            <person name="Sato H."/>
            <person name="Nagai K."/>
            <person name="Kimura K."/>
            <person name="Makita H."/>
            <person name="Sekine M."/>
            <person name="Obayashi M."/>
            <person name="Nishi T."/>
            <person name="Shibahara T."/>
            <person name="Tanaka T."/>
            <person name="Ishii S."/>
            <person name="Yamamoto J."/>
            <person name="Saito K."/>
            <person name="Kawai Y."/>
            <person name="Isono Y."/>
            <person name="Nakamura Y."/>
            <person name="Nagahari K."/>
            <person name="Murakami K."/>
            <person name="Yasuda T."/>
            <person name="Iwayanagi T."/>
            <person name="Wagatsuma M."/>
            <person name="Shiratori A."/>
            <person name="Sudo H."/>
            <person name="Hosoiri T."/>
            <person name="Kaku Y."/>
            <person name="Kodaira H."/>
            <person name="Kondo H."/>
            <person name="Sugawara M."/>
            <person name="Takahashi M."/>
            <person name="Kanda K."/>
            <person name="Yokoi T."/>
            <person name="Furuya T."/>
            <person name="Kikkawa E."/>
            <person name="Omura Y."/>
            <person name="Abe K."/>
            <person name="Kamihara K."/>
            <person name="Katsuta N."/>
            <person name="Sato K."/>
            <person name="Tanikawa M."/>
            <person name="Yamazaki M."/>
            <person name="Ninomiya K."/>
            <person name="Ishibashi T."/>
            <person name="Yamashita H."/>
            <person name="Murakawa K."/>
            <person name="Fujimori K."/>
            <person name="Tanai H."/>
            <person name="Kimata M."/>
            <person name="Watanabe M."/>
            <person name="Hiraoka S."/>
            <person name="Chiba Y."/>
            <person name="Ishida S."/>
            <person name="Ono Y."/>
            <person name="Takiguchi S."/>
            <person name="Watanabe S."/>
            <person name="Yosida M."/>
            <person name="Hotuta T."/>
            <person name="Kusano J."/>
            <person name="Kanehori K."/>
            <person name="Takahashi-Fujii A."/>
            <person name="Hara H."/>
            <person name="Tanase T.-O."/>
            <person name="Nomura Y."/>
            <person name="Togiya S."/>
            <person name="Komai F."/>
            <person name="Hara R."/>
            <person name="Takeuchi K."/>
            <person name="Arita M."/>
            <person name="Imose N."/>
            <person name="Musashino K."/>
            <person name="Yuuki H."/>
            <person name="Oshima A."/>
            <person name="Sasaki N."/>
            <person name="Aotsuka S."/>
            <person name="Yoshikawa Y."/>
            <person name="Matsunawa H."/>
            <person name="Ichihara T."/>
            <person name="Shiohata N."/>
            <person name="Sano S."/>
            <person name="Moriya S."/>
            <person name="Momiyama H."/>
            <person name="Satoh N."/>
            <person name="Takami S."/>
            <person name="Terashima Y."/>
            <person name="Suzuki O."/>
            <person name="Nakagawa S."/>
            <person name="Senoh A."/>
            <person name="Mizoguchi H."/>
            <person name="Goto Y."/>
            <person name="Shimizu F."/>
            <person name="Wakebe H."/>
            <person name="Hishigaki H."/>
            <person name="Watanabe T."/>
            <person name="Sugiyama A."/>
            <person name="Takemoto M."/>
            <person name="Kawakami B."/>
            <person name="Yamazaki M."/>
            <person name="Watanabe K."/>
            <person name="Kumagai A."/>
            <person name="Itakura S."/>
            <person name="Fukuzumi Y."/>
            <person name="Fujimori Y."/>
            <person name="Komiyama M."/>
            <person name="Tashiro H."/>
            <person name="Tanigami A."/>
            <person name="Fujiwara T."/>
            <person name="Ono T."/>
            <person name="Yamada K."/>
            <person name="Fujii Y."/>
            <person name="Ozaki K."/>
            <person name="Hirao M."/>
            <person name="Ohmori Y."/>
            <person name="Kawabata A."/>
            <person name="Hikiji T."/>
            <person name="Kobatake N."/>
            <person name="Inagaki H."/>
            <person name="Ikema Y."/>
            <person name="Okamoto S."/>
            <person name="Okitani R."/>
            <person name="Kawakami T."/>
            <person name="Noguchi S."/>
            <person name="Itoh T."/>
            <person name="Shigeta K."/>
            <person name="Senba T."/>
            <person name="Matsumura K."/>
            <person name="Nakajima Y."/>
            <person name="Mizuno T."/>
            <person name="Morinaga M."/>
            <person name="Sasaki M."/>
            <person name="Togashi T."/>
            <person name="Oyama M."/>
            <person name="Hata H."/>
            <person name="Watanabe M."/>
            <person name="Komatsu T."/>
            <person name="Mizushima-Sugano J."/>
            <person name="Satoh T."/>
            <person name="Shirai Y."/>
            <person name="Takahashi Y."/>
            <person name="Nakagawa K."/>
            <person name="Okumura K."/>
            <person name="Nagase T."/>
            <person name="Nomura N."/>
            <person name="Kikuchi H."/>
            <person name="Masuho Y."/>
            <person name="Yamashita R."/>
            <person name="Nakai K."/>
            <person name="Yada T."/>
            <person name="Nakamura Y."/>
            <person name="Ohara O."/>
            <person name="Isogai T."/>
            <person name="Sugano S."/>
        </authorList>
    </citation>
    <scope>NUCLEOTIDE SEQUENCE [LARGE SCALE MRNA] (ISOFORMS 1 AND 2)</scope>
    <source>
        <tissue>Placenta</tissue>
        <tissue>Trachea</tissue>
    </source>
</reference>
<reference key="5">
    <citation type="submission" date="2005-07" db="EMBL/GenBank/DDBJ databases">
        <authorList>
            <person name="Mural R.J."/>
            <person name="Istrail S."/>
            <person name="Sutton G.G."/>
            <person name="Florea L."/>
            <person name="Halpern A.L."/>
            <person name="Mobarry C.M."/>
            <person name="Lippert R."/>
            <person name="Walenz B."/>
            <person name="Shatkay H."/>
            <person name="Dew I."/>
            <person name="Miller J.R."/>
            <person name="Flanigan M.J."/>
            <person name="Edwards N.J."/>
            <person name="Bolanos R."/>
            <person name="Fasulo D."/>
            <person name="Halldorsson B.V."/>
            <person name="Hannenhalli S."/>
            <person name="Turner R."/>
            <person name="Yooseph S."/>
            <person name="Lu F."/>
            <person name="Nusskern D.R."/>
            <person name="Shue B.C."/>
            <person name="Zheng X.H."/>
            <person name="Zhong F."/>
            <person name="Delcher A.L."/>
            <person name="Huson D.H."/>
            <person name="Kravitz S.A."/>
            <person name="Mouchard L."/>
            <person name="Reinert K."/>
            <person name="Remington K.A."/>
            <person name="Clark A.G."/>
            <person name="Waterman M.S."/>
            <person name="Eichler E.E."/>
            <person name="Adams M.D."/>
            <person name="Hunkapiller M.W."/>
            <person name="Myers E.W."/>
            <person name="Venter J.C."/>
        </authorList>
    </citation>
    <scope>NUCLEOTIDE SEQUENCE [LARGE SCALE GENOMIC DNA]</scope>
</reference>
<reference key="6">
    <citation type="journal article" date="2004" name="Genome Res.">
        <title>The status, quality, and expansion of the NIH full-length cDNA project: the Mammalian Gene Collection (MGC).</title>
        <authorList>
            <consortium name="The MGC Project Team"/>
        </authorList>
    </citation>
    <scope>NUCLEOTIDE SEQUENCE [LARGE SCALE MRNA] (ISOFORM 1)</scope>
    <source>
        <tissue>Testis</tissue>
    </source>
</reference>
<reference key="7">
    <citation type="journal article" date="1994" name="J. Biol. Chem.">
        <title>A single promoter directs both housekeeping and erythroid preferential expression of the human ferrochelatase gene.</title>
        <authorList>
            <person name="Tugores A."/>
            <person name="Magness S.T."/>
            <person name="Brenner D.A."/>
        </authorList>
    </citation>
    <scope>NUCLEOTIDE SEQUENCE [GENOMIC DNA] OF 1-22</scope>
</reference>
<reference key="8">
    <citation type="submission" date="2002-03" db="EMBL/GenBank/DDBJ databases">
        <title>Molecular analysis of ferrochelatase gene in erythropoietic protoporphyria.</title>
        <authorList>
            <person name="Di Pierro E."/>
            <person name="Martinez di Montemuros F."/>
            <person name="Moriondo V."/>
            <person name="Cappellini M.D."/>
        </authorList>
    </citation>
    <scope>NUCLEOTIDE SEQUENCE [GENOMIC DNA] OF 1-22</scope>
</reference>
<reference key="9">
    <citation type="journal article" date="1994" name="J. Biol. Chem.">
        <title>Mammalian ferrochelatase. Expression and characterization of normal and two human protoporphyric ferrochelatases.</title>
        <authorList>
            <person name="Dailey H.A."/>
            <person name="Sellers V.M."/>
            <person name="Dailey T.A."/>
        </authorList>
    </citation>
    <scope>FUNCTION</scope>
    <scope>CATALYTIC ACTIVITY</scope>
    <scope>COFACTOR</scope>
    <scope>MUTAGENESIS OF CYS-196; CYS-360; CYS-395; CYS-403; CYS-406; CYS-411 AND PHE-417</scope>
</reference>
<reference key="10">
    <citation type="journal article" date="1996" name="Biochemistry">
        <title>Site-directed mutagenesis and spectroscopic characterization of human ferrochelatase: identification of residues coordinating the [2Fe-2S] cluster.</title>
        <authorList>
            <person name="Crouse B.R."/>
            <person name="Sellers V.M."/>
            <person name="Finnegan M.G."/>
            <person name="Dailey H.A."/>
            <person name="Johnson M.K."/>
        </authorList>
    </citation>
    <scope>IDENTIFICATION OF CYSTEINES COORDINATING THE 2FE-2S CLUSTER</scope>
</reference>
<reference key="11">
    <citation type="journal article" date="1998" name="J. Biol. Chem.">
        <title>Evidence that the fourth ligand to the 2Fe-2S cluster in animal ferrochelatase is a cysteine. Characterization of the enzyme from Drosophila melanogaster.</title>
        <authorList>
            <person name="Sellers V.M."/>
            <person name="Wang K.-F."/>
            <person name="Johnson M.K."/>
            <person name="Dailey H.A."/>
        </authorList>
    </citation>
    <scope>IDENTIFICATION OF CYSTEINES COORDINATING THE 2FE-2S CLUSTER</scope>
</reference>
<reference key="12">
    <citation type="journal article" date="2011" name="BMC Syst. Biol.">
        <title>Initial characterization of the human central proteome.</title>
        <authorList>
            <person name="Burkard T.R."/>
            <person name="Planyavsky M."/>
            <person name="Kaupe I."/>
            <person name="Breitwieser F.P."/>
            <person name="Buerckstuemmer T."/>
            <person name="Bennett K.L."/>
            <person name="Superti-Furga G."/>
            <person name="Colinge J."/>
        </authorList>
    </citation>
    <scope>IDENTIFICATION BY MASS SPECTROMETRY [LARGE SCALE ANALYSIS]</scope>
</reference>
<reference key="13">
    <citation type="journal article" date="2014" name="J. Proteomics">
        <title>An enzyme assisted RP-RPLC approach for in-depth analysis of human liver phosphoproteome.</title>
        <authorList>
            <person name="Bian Y."/>
            <person name="Song C."/>
            <person name="Cheng K."/>
            <person name="Dong M."/>
            <person name="Wang F."/>
            <person name="Huang J."/>
            <person name="Sun D."/>
            <person name="Wang L."/>
            <person name="Ye M."/>
            <person name="Zou H."/>
        </authorList>
    </citation>
    <scope>IDENTIFICATION BY MASS SPECTROMETRY [LARGE SCALE ANALYSIS]</scope>
    <source>
        <tissue>Liver</tissue>
    </source>
</reference>
<reference key="14">
    <citation type="journal article" date="2015" name="Proteomics">
        <title>N-terminome analysis of the human mitochondrial proteome.</title>
        <authorList>
            <person name="Vaca Jacome A.S."/>
            <person name="Rabilloud T."/>
            <person name="Schaeffer-Reiss C."/>
            <person name="Rompais M."/>
            <person name="Ayoub D."/>
            <person name="Lane L."/>
            <person name="Bairoch A."/>
            <person name="Van Dorsselaer A."/>
            <person name="Carapito C."/>
        </authorList>
    </citation>
    <scope>IDENTIFICATION BY MASS SPECTROMETRY [LARGE SCALE ANALYSIS]</scope>
</reference>
<reference key="15">
    <citation type="journal article" date="2016" name="Biochemistry">
        <title>A Novel Role for Progesterone Receptor Membrane Component 1 (PGRMC1): A Partner and Regulator of Ferrochelatase.</title>
        <authorList>
            <person name="Piel R.B. III"/>
            <person name="Shiferaw M.T."/>
            <person name="Vashisht A.A."/>
            <person name="Marcero J.R."/>
            <person name="Praissman J.L."/>
            <person name="Phillips J.D."/>
            <person name="Wohlschlegel J.A."/>
            <person name="Medlock A.E."/>
        </authorList>
    </citation>
    <scope>FUNCTION</scope>
    <scope>INTERACTION WITH PGRMC1</scope>
    <scope>MUTAGENESIS OF PHE-110</scope>
    <scope>CATALYTIC ACTIVITY</scope>
</reference>
<reference key="16">
    <citation type="journal article" date="2019" name="Haematologica">
        <title>Dimeric ferrochelatase bridges ABCB7 and ABCB10 homodimers in an architecturally defined molecular complex required for heme biosynthesis.</title>
        <authorList>
            <person name="Maio N."/>
            <person name="Kim K.S."/>
            <person name="Holmes-Hampton G."/>
            <person name="Singh A."/>
            <person name="Rouault T.A."/>
        </authorList>
    </citation>
    <scope>INTERACTION WITH ABCB7 AND ABCB10</scope>
    <scope>SUBUNIT</scope>
</reference>
<reference evidence="28" key="17">
    <citation type="journal article" date="2001" name="Nat. Struct. Biol.">
        <title>The 2.0 A structure of human ferrochelatase, the terminal enzyme of heme biosynthesis.</title>
        <authorList>
            <person name="Wu C.-K."/>
            <person name="Dailey H.A."/>
            <person name="Rose J.P."/>
            <person name="Burden A."/>
            <person name="Sellers V.M."/>
            <person name="Wang B.-C."/>
        </authorList>
    </citation>
    <scope>X-RAY CRYSTALLOGRAPHY (2.0 ANGSTROMS)</scope>
    <scope>SUBUNIT</scope>
    <scope>COFACTOR</scope>
    <scope>IRON-SULFUR CLUSTER</scope>
    <scope>ACTIVE SITES</scope>
</reference>
<reference evidence="29" key="18">
    <citation type="journal article" date="2007" name="Proc. Natl. Acad. Sci. U.S.A.">
        <title>Substrate interactions with human ferrochelatase.</title>
        <authorList>
            <person name="Medlock A."/>
            <person name="Swartz L."/>
            <person name="Dailey T.A."/>
            <person name="Dailey H.A."/>
            <person name="Lanzilotta W.N."/>
        </authorList>
    </citation>
    <scope>X-RAY CRYSTALLOGRAPHY (1.7 ANGSTROMS) OF 65-423 ALONE AND IN COMPLEX WITH PROTOPORPHYRIN IX</scope>
    <scope>SUBUNIT</scope>
    <scope>COFACTOR</scope>
    <scope>IRON-SULFUR CLUSTER</scope>
</reference>
<reference key="19">
    <citation type="journal article" date="1997" name="J. Inherit. Metab. Dis.">
        <title>Erythropoietic protoporphyria.</title>
        <authorList>
            <person name="Cox T.M."/>
        </authorList>
    </citation>
    <scope>REVIEW ON VARIANTS EPP1</scope>
</reference>
<reference key="20">
    <citation type="journal article" date="1991" name="Biochem. Biophys. Res. Commun.">
        <title>Human erythropoietic protoporphyria: two point mutations in the ferrochelatase gene.</title>
        <authorList>
            <person name="Lamoril J."/>
            <person name="Boulechfar S."/>
            <person name="de Verneuil H."/>
            <person name="Grandchamp B."/>
            <person name="Nordmann Y."/>
            <person name="Deybach J.-C."/>
        </authorList>
    </citation>
    <scope>VARIANTS EPP1 CYS-55 AND ILE-267</scope>
</reference>
<reference key="21">
    <citation type="journal article" date="1992" name="Am. J. Hum. Genet.">
        <title>A molecular defect in human protoporphyria.</title>
        <authorList>
            <person name="Brenner D.A."/>
            <person name="Didier J.M."/>
            <person name="Frasier F."/>
            <person name="Christensen S.R."/>
            <person name="Evans G.A."/>
            <person name="Dailey H.A."/>
        </authorList>
    </citation>
    <scope>VARIANT EPP1 SER-417</scope>
</reference>
<reference key="22">
    <citation type="journal article" date="1994" name="Lancet">
        <title>Recessive inheritance of erythropoietic protoporphyria with liver failure.</title>
        <authorList>
            <person name="Sarkany R.P.E."/>
            <person name="Alexander G.J.M.A."/>
            <person name="Cox T.M."/>
        </authorList>
    </citation>
    <scope>VARIANT EPP1 GLY-362</scope>
</reference>
<reference key="23">
    <citation type="journal article" date="1996" name="Br. J. Haematol.">
        <title>A novel mutation in the ferrochelatase gene associated with erythropoietic protoporphyria.</title>
        <authorList>
            <person name="Imoto S."/>
            <person name="Tanizawa Y."/>
            <person name="Sata Y."/>
            <person name="Kaku K."/>
            <person name="Oka Y."/>
        </authorList>
    </citation>
    <scope>VARIANT EPP1 THR-186</scope>
</reference>
<reference key="24">
    <citation type="journal article" date="1998" name="Am. J. Hum. Genet.">
        <title>Systematic analysis of molecular defects in the ferrochelatase gene from patients with erythropoietic protoporphyria.</title>
        <authorList>
            <person name="Ruefenacht U.B."/>
            <person name="Gouya L."/>
            <person name="Schneider-Yin X."/>
            <person name="Puy H."/>
            <person name="Schaefer B.W."/>
            <person name="Aquaron R."/>
            <person name="Nordmann Y."/>
            <person name="Minder E.I."/>
            <person name="Deybach J.-C."/>
        </authorList>
    </citation>
    <scope>VARIANTS EPP1 LYS-71; PRO-151; HIS-191; THR-192; ILE-283; LYS-288; LEU-334 AND PHE-417 DEL</scope>
    <scope>CHARACTERIZATION OF VARIANTS EPP1 LYS-71; PRO-151; HIS-191; THR-192; ILE-283; LYS-288; LEU-334 AND PHE-417 DEL</scope>
</reference>
<reference key="25">
    <citation type="journal article" date="1998" name="J. Invest. Dermatol.">
        <title>Mutations in the ferrochelatase gene of four Spanish patients with erythropoietic protoporphyria.</title>
        <authorList>
            <person name="Gouya L."/>
            <person name="Schneider-Yin X."/>
            <person name="Rufenacht U."/>
            <person name="Herrero C."/>
            <person name="Lecha M."/>
            <person name="Mascaro J.M."/>
            <person name="Puy H."/>
            <person name="Deybach J.-C."/>
            <person name="Minder E.I."/>
        </authorList>
    </citation>
    <scope>VARIANT EPP1 PRO-386</scope>
</reference>
<reference key="26">
    <citation type="journal article" date="2000" name="Blood">
        <title>Mutations in the iron-sulfur cluster ligands of the human ferrochelatase lead to erythropoietic protoporphyria.</title>
        <authorList>
            <person name="Schneider-Yin X."/>
            <person name="Gouya L."/>
            <person name="Dorsey M."/>
            <person name="Ruefenacht U."/>
            <person name="Deybach J.-C."/>
            <person name="Ferreira G.C."/>
        </authorList>
    </citation>
    <scope>VARIANTS EPP1 SER-406; TYR-406 AND 408-ASN--CYS-411 DELINS LYS-SER-VAL-GLY</scope>
    <scope>CHARACTERIZATION OF VARIANTS EPP1 SER-406; TYR-406 AND 408-ASN--CYS-411 DELINS LYS-SER-VAL-GLY</scope>
</reference>
<reference key="27">
    <citation type="journal article" date="2001" name="Clin. Chem.">
        <title>New missense mutation in the human ferrochelatase gene in a family with erythropoietic protoporphyria: functional studies and correlation of genotype and phenotype.</title>
        <authorList>
            <person name="Ruefenacht U.B."/>
            <person name="Gregor A."/>
            <person name="Gouya L."/>
            <person name="Tarczynska-Nosal S."/>
            <person name="Schneider-Yin X."/>
            <person name="Deybach J.-C."/>
        </authorList>
    </citation>
    <scope>VARIANT EPP1 ARG-182</scope>
    <scope>CHARACTERIZATION OF VARIANT EPP1 ARG-182</scope>
</reference>
<reference key="28">
    <citation type="journal article" date="2002" name="J. Am. Acad. Dermatol.">
        <title>Erythropoietic protoporphyria: altered phenotype after bone marrow transplantation for myelogenous leukemia in a patient heteroallelic for ferrochelatase gene mutations.</title>
        <authorList>
            <person name="Poh-Fitzpatrick M.B."/>
            <person name="Wang X."/>
            <person name="Anderson K.E."/>
            <person name="Bloomer J.R."/>
            <person name="Bolwell B."/>
            <person name="Lichtin A.E."/>
        </authorList>
    </citation>
    <scope>VARIANT EPP1 ARG-62</scope>
</reference>
<reference key="29">
    <citation type="journal article" date="2003" name="J. Hum. Genet.">
        <title>Novel mutations and phenotypic effect of the splice site modulator IVS3-48C in nine Swedish families with erythropoietic protoporphyria.</title>
        <authorList>
            <person name="Wiman A."/>
            <person name="Floderus Y."/>
            <person name="Harper P."/>
        </authorList>
    </citation>
    <scope>VARIANTS EPP1 LYS-178 AND LEU-334</scope>
</reference>
<reference key="30">
    <citation type="journal article" date="2004" name="J. Med. Genet.">
        <title>Autosomal recessive erythropoietic protoporphyria in the United Kingdom: prevalence and relationship to liver disease.</title>
        <authorList>
            <person name="Whatley S.D."/>
            <person name="Mason N.G."/>
            <person name="Khan M."/>
            <person name="Zamiri M."/>
            <person name="Badminton M.N."/>
            <person name="Missaoui W.N."/>
            <person name="Dailey T.A."/>
            <person name="Dailey H.A."/>
            <person name="Douglas W.S."/>
            <person name="Wainwright N.J."/>
            <person name="Elder G.H."/>
        </authorList>
    </citation>
    <scope>VARIANTS EPP1 LEU-139; TYR-236; LEU-260 AND ASN-379</scope>
    <scope>CHARACTERIZATION OF VARIANTS EPP1 LEU-139; TYR-236; LEU-260 AND ASN-379</scope>
</reference>
<reference key="31">
    <citation type="journal article" date="2007" name="Mol. Genet. Metab.">
        <title>Heterogeneity of mutations in the ferrochelatase gene in Italian patients with erythropoietic protoporphyria.</title>
        <authorList>
            <person name="Aurizi C."/>
            <person name="Schneider-Yin X."/>
            <person name="Sorge F."/>
            <person name="Macri A."/>
            <person name="Minder E.I."/>
            <person name="Biolcati G."/>
        </authorList>
    </citation>
    <scope>VARIANT EPP1 LEU-264</scope>
</reference>
<organism>
    <name type="scientific">Homo sapiens</name>
    <name type="common">Human</name>
    <dbReference type="NCBI Taxonomy" id="9606"/>
    <lineage>
        <taxon>Eukaryota</taxon>
        <taxon>Metazoa</taxon>
        <taxon>Chordata</taxon>
        <taxon>Craniata</taxon>
        <taxon>Vertebrata</taxon>
        <taxon>Euteleostomi</taxon>
        <taxon>Mammalia</taxon>
        <taxon>Eutheria</taxon>
        <taxon>Euarchontoglires</taxon>
        <taxon>Primates</taxon>
        <taxon>Haplorrhini</taxon>
        <taxon>Catarrhini</taxon>
        <taxon>Hominidae</taxon>
        <taxon>Homo</taxon>
    </lineage>
</organism>
<comment type="function">
    <text evidence="14 17">Catalyzes the ferrous insertion into protoporphyrin IX and participates in the terminal step in the heme biosynthetic pathway.</text>
</comment>
<comment type="catalytic activity">
    <reaction evidence="14 17">
        <text>heme b + 2 H(+) = protoporphyrin IX + Fe(2+)</text>
        <dbReference type="Rhea" id="RHEA:22584"/>
        <dbReference type="ChEBI" id="CHEBI:15378"/>
        <dbReference type="ChEBI" id="CHEBI:29033"/>
        <dbReference type="ChEBI" id="CHEBI:57306"/>
        <dbReference type="ChEBI" id="CHEBI:60344"/>
        <dbReference type="EC" id="4.98.1.1"/>
    </reaction>
    <physiologicalReaction direction="right-to-left" evidence="14">
        <dbReference type="Rhea" id="RHEA:22586"/>
    </physiologicalReaction>
</comment>
<comment type="cofactor">
    <cofactor evidence="4 11">
        <name>[2Fe-2S] cluster</name>
        <dbReference type="ChEBI" id="CHEBI:190135"/>
    </cofactor>
    <text evidence="4 11 17">Binds 1 [2Fe-2S] cluster.</text>
</comment>
<comment type="activity regulation">
    <text evidence="24 25">Inhibited by nitric oxide (NO). The 2Fe-2S cluster could act as a NO sensor.</text>
</comment>
<comment type="pathway">
    <text evidence="14 17">Porphyrin-containing compound metabolism; protoheme biosynthesis; protoheme from protoporphyrin-IX: step 1/1.</text>
</comment>
<comment type="subunit">
    <text evidence="1 4 11 14 15">Homodimer (PubMed:11175906, PubMed:30765471). Homotetramer (PubMed:17261801). Interacts with PGRMC1; the interaction results in decreased FECH activity (PubMed:27599036). Interacts with ABCB10 and SLC25A37; this interaction forms an oligomeric complex (By similarity). Forms a complex with ABCB7 and ABCB10, where a dimeric FECH bridges ABCB7 and ABCB10 homodimers; this complex may be required for cellular iron homeostasis, mitochondrial function and heme biosynthesis (PubMed:30765471). Interacts with ABCB7 and ABCB10 (PubMed:30765471).</text>
</comment>
<comment type="interaction">
    <interactant intactId="EBI-1390356">
        <id>P22830</id>
    </interactant>
    <interactant intactId="EBI-6164528">
        <id>Q9NRK6</id>
        <label>ABCB10</label>
    </interactant>
    <organismsDiffer>false</organismsDiffer>
    <experiments>2</experiments>
</comment>
<comment type="interaction">
    <interactant intactId="EBI-1390356">
        <id>P22830</id>
    </interactant>
    <interactant intactId="EBI-1236950">
        <id>O75027</id>
        <label>ABCB7</label>
    </interactant>
    <organismsDiffer>false</organismsDiffer>
    <experiments>9</experiments>
</comment>
<comment type="interaction">
    <interactant intactId="EBI-1390356">
        <id>P22830</id>
    </interactant>
    <interactant intactId="EBI-1390356">
        <id>P22830</id>
        <label>FECH</label>
    </interactant>
    <organismsDiffer>false</organismsDiffer>
    <experiments>4</experiments>
</comment>
<comment type="interaction">
    <interactant intactId="EBI-1390356">
        <id>P22830</id>
    </interactant>
    <interactant intactId="EBI-1045534">
        <id>O00264</id>
        <label>PGRMC1</label>
    </interactant>
    <organismsDiffer>false</organismsDiffer>
    <experiments>4</experiments>
</comment>
<comment type="interaction">
    <interactant intactId="EBI-1390356">
        <id>P22830</id>
    </interactant>
    <interactant intactId="EBI-1033507">
        <id>P16035</id>
        <label>TIMP2</label>
    </interactant>
    <organismsDiffer>false</organismsDiffer>
    <experiments>2</experiments>
</comment>
<comment type="subcellular location">
    <subcellularLocation>
        <location evidence="1">Mitochondrion inner membrane</location>
        <topology evidence="1">Peripheral membrane protein</topology>
        <orientation evidence="1">Matrix side</orientation>
    </subcellularLocation>
</comment>
<comment type="alternative products">
    <event type="alternative splicing"/>
    <isoform>
        <id>P22830-1</id>
        <name>1</name>
        <sequence type="displayed"/>
    </isoform>
    <isoform>
        <id>P22830-2</id>
        <name>2</name>
        <sequence type="described" ref="VSP_041208"/>
    </isoform>
</comment>
<comment type="disease" evidence="3 5 6 7 8 9 10 12 16 18 19 20 21">
    <disease id="DI-00484">
        <name>Protoporphyria, erythropoietic, 1</name>
        <acronym>EPP1</acronym>
        <description>An autosomal recessive form of porphyria with onset usually before age 10 years. Porphyrias are inherited defects in the biosynthesis of heme, resulting in the accumulation and increased excretion of porphyrins or porphyrin precursors. They are classified as erythropoietic or hepatic, depending on whether the enzyme deficiency occurs in red blood cells or in the liver. Erythropoietic protoporphyria is marked by excessive protoporphyrin in erythrocytes, plasma, liver and feces, and by widely varying photosensitive skin changes ranging from a burning or pruritic sensation to erythema, edema and wheals.</description>
        <dbReference type="MIM" id="177000"/>
    </disease>
    <text>The disease is caused by variants affecting the gene represented in this entry.</text>
</comment>
<comment type="similarity">
    <text evidence="26">Belongs to the ferrochelatase family.</text>
</comment>
<comment type="online information" name="Wikipedia">
    <link uri="https://en.wikipedia.org/wiki/Ferrochelatase"/>
    <text>Ferrochelatase entry</text>
</comment>
<protein>
    <recommendedName>
        <fullName evidence="26">Ferrochelatase, mitochondrial</fullName>
        <ecNumber evidence="14 17">4.98.1.1</ecNumber>
    </recommendedName>
    <alternativeName>
        <fullName>Heme synthase</fullName>
    </alternativeName>
    <alternativeName>
        <fullName>Protoheme ferro-lyase</fullName>
    </alternativeName>
</protein>
<evidence type="ECO:0000250" key="1">
    <source>
        <dbReference type="UniProtKB" id="P22315"/>
    </source>
</evidence>
<evidence type="ECO:0000255" key="2"/>
<evidence type="ECO:0000269" key="3">
    <source>
    </source>
</evidence>
<evidence type="ECO:0000269" key="4">
    <source>
    </source>
</evidence>
<evidence type="ECO:0000269" key="5">
    <source>
    </source>
</evidence>
<evidence type="ECO:0000269" key="6">
    <source>
    </source>
</evidence>
<evidence type="ECO:0000269" key="7">
    <source>
    </source>
</evidence>
<evidence type="ECO:0000269" key="8">
    <source>
    </source>
</evidence>
<evidence type="ECO:0000269" key="9">
    <source>
    </source>
</evidence>
<evidence type="ECO:0000269" key="10">
    <source>
    </source>
</evidence>
<evidence type="ECO:0000269" key="11">
    <source>
    </source>
</evidence>
<evidence type="ECO:0000269" key="12">
    <source>
    </source>
</evidence>
<evidence type="ECO:0000269" key="13">
    <source>
    </source>
</evidence>
<evidence type="ECO:0000269" key="14">
    <source>
    </source>
</evidence>
<evidence type="ECO:0000269" key="15">
    <source>
    </source>
</evidence>
<evidence type="ECO:0000269" key="16">
    <source>
    </source>
</evidence>
<evidence type="ECO:0000269" key="17">
    <source>
    </source>
</evidence>
<evidence type="ECO:0000269" key="18">
    <source>
    </source>
</evidence>
<evidence type="ECO:0000269" key="19">
    <source>
    </source>
</evidence>
<evidence type="ECO:0000269" key="20">
    <source>
    </source>
</evidence>
<evidence type="ECO:0000269" key="21">
    <source>
    </source>
</evidence>
<evidence type="ECO:0000269" key="22">
    <source ref="2"/>
</evidence>
<evidence type="ECO:0000303" key="23">
    <source>
    </source>
</evidence>
<evidence type="ECO:0000303" key="24">
    <source>
    </source>
</evidence>
<evidence type="ECO:0000303" key="25">
    <source>
    </source>
</evidence>
<evidence type="ECO:0000305" key="26"/>
<evidence type="ECO:0000312" key="27">
    <source>
        <dbReference type="HGNC" id="HGNC:3647"/>
    </source>
</evidence>
<evidence type="ECO:0007744" key="28">
    <source>
        <dbReference type="PDB" id="1HRK"/>
    </source>
</evidence>
<evidence type="ECO:0007744" key="29">
    <source>
        <dbReference type="PDB" id="2HRC"/>
    </source>
</evidence>
<evidence type="ECO:0007744" key="30">
    <source>
        <dbReference type="PDB" id="2HRE"/>
    </source>
</evidence>
<evidence type="ECO:0007829" key="31">
    <source>
        <dbReference type="PDB" id="2HRC"/>
    </source>
</evidence>
<evidence type="ECO:0007829" key="32">
    <source>
        <dbReference type="PDB" id="3HCN"/>
    </source>
</evidence>
<evidence type="ECO:0007829" key="33">
    <source>
        <dbReference type="PDB" id="4KLR"/>
    </source>
</evidence>